<dbReference type="EMBL" id="AE016795">
    <property type="protein sequence ID" value="AAO09510.1"/>
    <property type="molecule type" value="Genomic_DNA"/>
</dbReference>
<dbReference type="RefSeq" id="WP_011079056.1">
    <property type="nucleotide sequence ID" value="NC_004459.3"/>
</dbReference>
<dbReference type="SMR" id="Q8DDG7"/>
<dbReference type="KEGG" id="vvu:VV1_1022"/>
<dbReference type="HOGENOM" id="CLU_084338_2_0_6"/>
<dbReference type="Proteomes" id="UP000002275">
    <property type="component" value="Chromosome 1"/>
</dbReference>
<dbReference type="GO" id="GO:0005886">
    <property type="term" value="C:plasma membrane"/>
    <property type="evidence" value="ECO:0007669"/>
    <property type="project" value="UniProtKB-SubCell"/>
</dbReference>
<dbReference type="GO" id="GO:0045259">
    <property type="term" value="C:proton-transporting ATP synthase complex"/>
    <property type="evidence" value="ECO:0007669"/>
    <property type="project" value="UniProtKB-KW"/>
</dbReference>
<dbReference type="GO" id="GO:0005524">
    <property type="term" value="F:ATP binding"/>
    <property type="evidence" value="ECO:0007669"/>
    <property type="project" value="UniProtKB-UniRule"/>
</dbReference>
<dbReference type="GO" id="GO:0046933">
    <property type="term" value="F:proton-transporting ATP synthase activity, rotational mechanism"/>
    <property type="evidence" value="ECO:0007669"/>
    <property type="project" value="UniProtKB-UniRule"/>
</dbReference>
<dbReference type="CDD" id="cd12152">
    <property type="entry name" value="F1-ATPase_delta"/>
    <property type="match status" value="1"/>
</dbReference>
<dbReference type="FunFam" id="1.20.5.440:FF:000001">
    <property type="entry name" value="ATP synthase epsilon chain"/>
    <property type="match status" value="1"/>
</dbReference>
<dbReference type="FunFam" id="2.60.15.10:FF:000001">
    <property type="entry name" value="ATP synthase epsilon chain"/>
    <property type="match status" value="1"/>
</dbReference>
<dbReference type="Gene3D" id="1.20.5.440">
    <property type="entry name" value="ATP synthase delta/epsilon subunit, C-terminal domain"/>
    <property type="match status" value="1"/>
</dbReference>
<dbReference type="Gene3D" id="2.60.15.10">
    <property type="entry name" value="F0F1 ATP synthase delta/epsilon subunit, N-terminal"/>
    <property type="match status" value="1"/>
</dbReference>
<dbReference type="HAMAP" id="MF_00530">
    <property type="entry name" value="ATP_synth_epsil_bac"/>
    <property type="match status" value="1"/>
</dbReference>
<dbReference type="InterPro" id="IPR036794">
    <property type="entry name" value="ATP_F1_dsu/esu_C_sf"/>
</dbReference>
<dbReference type="InterPro" id="IPR001469">
    <property type="entry name" value="ATP_synth_F1_dsu/esu"/>
</dbReference>
<dbReference type="InterPro" id="IPR020546">
    <property type="entry name" value="ATP_synth_F1_dsu/esu_N"/>
</dbReference>
<dbReference type="InterPro" id="IPR020547">
    <property type="entry name" value="ATP_synth_F1_esu_C"/>
</dbReference>
<dbReference type="InterPro" id="IPR036771">
    <property type="entry name" value="ATPsynth_dsu/esu_N"/>
</dbReference>
<dbReference type="NCBIfam" id="TIGR01216">
    <property type="entry name" value="ATP_synt_epsi"/>
    <property type="match status" value="1"/>
</dbReference>
<dbReference type="NCBIfam" id="NF001847">
    <property type="entry name" value="PRK00571.1-4"/>
    <property type="match status" value="1"/>
</dbReference>
<dbReference type="PANTHER" id="PTHR13822">
    <property type="entry name" value="ATP SYNTHASE DELTA/EPSILON CHAIN"/>
    <property type="match status" value="1"/>
</dbReference>
<dbReference type="PANTHER" id="PTHR13822:SF10">
    <property type="entry name" value="ATP SYNTHASE EPSILON CHAIN, CHLOROPLASTIC"/>
    <property type="match status" value="1"/>
</dbReference>
<dbReference type="Pfam" id="PF00401">
    <property type="entry name" value="ATP-synt_DE"/>
    <property type="match status" value="1"/>
</dbReference>
<dbReference type="Pfam" id="PF02823">
    <property type="entry name" value="ATP-synt_DE_N"/>
    <property type="match status" value="1"/>
</dbReference>
<dbReference type="SUPFAM" id="SSF46604">
    <property type="entry name" value="Epsilon subunit of F1F0-ATP synthase C-terminal domain"/>
    <property type="match status" value="1"/>
</dbReference>
<dbReference type="SUPFAM" id="SSF51344">
    <property type="entry name" value="Epsilon subunit of F1F0-ATP synthase N-terminal domain"/>
    <property type="match status" value="1"/>
</dbReference>
<keyword id="KW-0066">ATP synthesis</keyword>
<keyword id="KW-0997">Cell inner membrane</keyword>
<keyword id="KW-1003">Cell membrane</keyword>
<keyword id="KW-0139">CF(1)</keyword>
<keyword id="KW-0375">Hydrogen ion transport</keyword>
<keyword id="KW-0406">Ion transport</keyword>
<keyword id="KW-0472">Membrane</keyword>
<keyword id="KW-0813">Transport</keyword>
<sequence>MAAITFHLDVVSAEKKIFSGRVETFQVTGSEGELGIFHGHTPLLTAIKPGMVRIVKLHGEEEFIYVSGGIVEVQPGTATVLADTAIRGEELDAAKAEEAKRRAKENILNQHGDMDFAQAASELAKAIAQLRVIELTKKRR</sequence>
<gene>
    <name evidence="1" type="primary">atpC</name>
    <name type="ordered locus">VV1_1022</name>
</gene>
<feature type="chain" id="PRO_0000188238" description="ATP synthase epsilon chain">
    <location>
        <begin position="1"/>
        <end position="140"/>
    </location>
</feature>
<accession>Q8DDG7</accession>
<organism>
    <name type="scientific">Vibrio vulnificus (strain CMCP6)</name>
    <dbReference type="NCBI Taxonomy" id="216895"/>
    <lineage>
        <taxon>Bacteria</taxon>
        <taxon>Pseudomonadati</taxon>
        <taxon>Pseudomonadota</taxon>
        <taxon>Gammaproteobacteria</taxon>
        <taxon>Vibrionales</taxon>
        <taxon>Vibrionaceae</taxon>
        <taxon>Vibrio</taxon>
    </lineage>
</organism>
<comment type="function">
    <text evidence="1">Produces ATP from ADP in the presence of a proton gradient across the membrane.</text>
</comment>
<comment type="subunit">
    <text>F-type ATPases have 2 components, CF(1) - the catalytic core - and CF(0) - the membrane proton channel. CF(1) has five subunits: alpha(3), beta(3), gamma(1), delta(1), epsilon(1). CF(0) has three main subunits: a, b and c.</text>
</comment>
<comment type="subcellular location">
    <subcellularLocation>
        <location evidence="1">Cell inner membrane</location>
        <topology evidence="1">Peripheral membrane protein</topology>
    </subcellularLocation>
</comment>
<comment type="similarity">
    <text evidence="1">Belongs to the ATPase epsilon chain family.</text>
</comment>
<proteinExistence type="inferred from homology"/>
<evidence type="ECO:0000255" key="1">
    <source>
        <dbReference type="HAMAP-Rule" id="MF_00530"/>
    </source>
</evidence>
<protein>
    <recommendedName>
        <fullName evidence="1">ATP synthase epsilon chain</fullName>
    </recommendedName>
    <alternativeName>
        <fullName evidence="1">ATP synthase F1 sector epsilon subunit</fullName>
    </alternativeName>
    <alternativeName>
        <fullName evidence="1">F-ATPase epsilon subunit</fullName>
    </alternativeName>
</protein>
<name>ATPE_VIBVU</name>
<reference key="1">
    <citation type="submission" date="2002-12" db="EMBL/GenBank/DDBJ databases">
        <title>Complete genome sequence of Vibrio vulnificus CMCP6.</title>
        <authorList>
            <person name="Rhee J.H."/>
            <person name="Kim S.Y."/>
            <person name="Chung S.S."/>
            <person name="Kim J.J."/>
            <person name="Moon Y.H."/>
            <person name="Jeong H."/>
            <person name="Choy H.E."/>
        </authorList>
    </citation>
    <scope>NUCLEOTIDE SEQUENCE [LARGE SCALE GENOMIC DNA]</scope>
    <source>
        <strain>CMCP6</strain>
    </source>
</reference>